<feature type="chain" id="PRO_0000076752" description="3-isopropylmalate dehydratase large subunit">
    <location>
        <begin position="1"/>
        <end position="469"/>
    </location>
</feature>
<feature type="binding site" evidence="1">
    <location>
        <position position="347"/>
    </location>
    <ligand>
        <name>[4Fe-4S] cluster</name>
        <dbReference type="ChEBI" id="CHEBI:49883"/>
    </ligand>
</feature>
<feature type="binding site" evidence="1">
    <location>
        <position position="408"/>
    </location>
    <ligand>
        <name>[4Fe-4S] cluster</name>
        <dbReference type="ChEBI" id="CHEBI:49883"/>
    </ligand>
</feature>
<feature type="binding site" evidence="1">
    <location>
        <position position="411"/>
    </location>
    <ligand>
        <name>[4Fe-4S] cluster</name>
        <dbReference type="ChEBI" id="CHEBI:49883"/>
    </ligand>
</feature>
<dbReference type="EC" id="4.2.1.33" evidence="1"/>
<dbReference type="EMBL" id="CP000057">
    <property type="protein sequence ID" value="AAX88025.1"/>
    <property type="molecule type" value="Genomic_DNA"/>
</dbReference>
<dbReference type="RefSeq" id="WP_011272333.1">
    <property type="nucleotide sequence ID" value="NC_007146.2"/>
</dbReference>
<dbReference type="SMR" id="Q4QLS2"/>
<dbReference type="GeneID" id="93220024"/>
<dbReference type="KEGG" id="hit:NTHI1162"/>
<dbReference type="HOGENOM" id="CLU_006714_3_4_6"/>
<dbReference type="UniPathway" id="UPA00048">
    <property type="reaction ID" value="UER00071"/>
</dbReference>
<dbReference type="Proteomes" id="UP000002525">
    <property type="component" value="Chromosome"/>
</dbReference>
<dbReference type="GO" id="GO:0003861">
    <property type="term" value="F:3-isopropylmalate dehydratase activity"/>
    <property type="evidence" value="ECO:0007669"/>
    <property type="project" value="UniProtKB-UniRule"/>
</dbReference>
<dbReference type="GO" id="GO:0051539">
    <property type="term" value="F:4 iron, 4 sulfur cluster binding"/>
    <property type="evidence" value="ECO:0007669"/>
    <property type="project" value="UniProtKB-KW"/>
</dbReference>
<dbReference type="GO" id="GO:0046872">
    <property type="term" value="F:metal ion binding"/>
    <property type="evidence" value="ECO:0007669"/>
    <property type="project" value="UniProtKB-KW"/>
</dbReference>
<dbReference type="GO" id="GO:0009098">
    <property type="term" value="P:L-leucine biosynthetic process"/>
    <property type="evidence" value="ECO:0007669"/>
    <property type="project" value="UniProtKB-UniRule"/>
</dbReference>
<dbReference type="CDD" id="cd01583">
    <property type="entry name" value="IPMI"/>
    <property type="match status" value="1"/>
</dbReference>
<dbReference type="FunFam" id="3.30.499.10:FF:000006">
    <property type="entry name" value="3-isopropylmalate dehydratase large subunit"/>
    <property type="match status" value="1"/>
</dbReference>
<dbReference type="FunFam" id="3.30.499.10:FF:000007">
    <property type="entry name" value="3-isopropylmalate dehydratase large subunit"/>
    <property type="match status" value="1"/>
</dbReference>
<dbReference type="Gene3D" id="3.30.499.10">
    <property type="entry name" value="Aconitase, domain 3"/>
    <property type="match status" value="2"/>
</dbReference>
<dbReference type="HAMAP" id="MF_01026">
    <property type="entry name" value="LeuC_type1"/>
    <property type="match status" value="1"/>
</dbReference>
<dbReference type="InterPro" id="IPR004430">
    <property type="entry name" value="3-IsopropMal_deHydase_lsu"/>
</dbReference>
<dbReference type="InterPro" id="IPR015931">
    <property type="entry name" value="Acnase/IPM_dHydase_lsu_aba_1/3"/>
</dbReference>
<dbReference type="InterPro" id="IPR001030">
    <property type="entry name" value="Acoase/IPM_deHydtase_lsu_aba"/>
</dbReference>
<dbReference type="InterPro" id="IPR018136">
    <property type="entry name" value="Aconitase_4Fe-4S_BS"/>
</dbReference>
<dbReference type="InterPro" id="IPR036008">
    <property type="entry name" value="Aconitase_4Fe-4S_dom"/>
</dbReference>
<dbReference type="InterPro" id="IPR050067">
    <property type="entry name" value="IPM_dehydratase_rel_enz"/>
</dbReference>
<dbReference type="InterPro" id="IPR033941">
    <property type="entry name" value="IPMI_cat"/>
</dbReference>
<dbReference type="NCBIfam" id="TIGR00170">
    <property type="entry name" value="leuC"/>
    <property type="match status" value="1"/>
</dbReference>
<dbReference type="NCBIfam" id="NF004016">
    <property type="entry name" value="PRK05478.1"/>
    <property type="match status" value="1"/>
</dbReference>
<dbReference type="NCBIfam" id="NF009116">
    <property type="entry name" value="PRK12466.1"/>
    <property type="match status" value="1"/>
</dbReference>
<dbReference type="PANTHER" id="PTHR43822:SF9">
    <property type="entry name" value="3-ISOPROPYLMALATE DEHYDRATASE"/>
    <property type="match status" value="1"/>
</dbReference>
<dbReference type="PANTHER" id="PTHR43822">
    <property type="entry name" value="HOMOACONITASE, MITOCHONDRIAL-RELATED"/>
    <property type="match status" value="1"/>
</dbReference>
<dbReference type="Pfam" id="PF00330">
    <property type="entry name" value="Aconitase"/>
    <property type="match status" value="1"/>
</dbReference>
<dbReference type="PRINTS" id="PR00415">
    <property type="entry name" value="ACONITASE"/>
</dbReference>
<dbReference type="SUPFAM" id="SSF53732">
    <property type="entry name" value="Aconitase iron-sulfur domain"/>
    <property type="match status" value="1"/>
</dbReference>
<dbReference type="PROSITE" id="PS00450">
    <property type="entry name" value="ACONITASE_1"/>
    <property type="match status" value="1"/>
</dbReference>
<dbReference type="PROSITE" id="PS01244">
    <property type="entry name" value="ACONITASE_2"/>
    <property type="match status" value="1"/>
</dbReference>
<accession>Q4QLS2</accession>
<organism>
    <name type="scientific">Haemophilus influenzae (strain 86-028NP)</name>
    <dbReference type="NCBI Taxonomy" id="281310"/>
    <lineage>
        <taxon>Bacteria</taxon>
        <taxon>Pseudomonadati</taxon>
        <taxon>Pseudomonadota</taxon>
        <taxon>Gammaproteobacteria</taxon>
        <taxon>Pasteurellales</taxon>
        <taxon>Pasteurellaceae</taxon>
        <taxon>Haemophilus</taxon>
    </lineage>
</organism>
<name>LEUC_HAEI8</name>
<evidence type="ECO:0000255" key="1">
    <source>
        <dbReference type="HAMAP-Rule" id="MF_01026"/>
    </source>
</evidence>
<keyword id="KW-0004">4Fe-4S</keyword>
<keyword id="KW-0028">Amino-acid biosynthesis</keyword>
<keyword id="KW-0100">Branched-chain amino acid biosynthesis</keyword>
<keyword id="KW-0408">Iron</keyword>
<keyword id="KW-0411">Iron-sulfur</keyword>
<keyword id="KW-0432">Leucine biosynthesis</keyword>
<keyword id="KW-0456">Lyase</keyword>
<keyword id="KW-0479">Metal-binding</keyword>
<comment type="function">
    <text evidence="1">Catalyzes the isomerization between 2-isopropylmalate and 3-isopropylmalate, via the formation of 2-isopropylmaleate.</text>
</comment>
<comment type="catalytic activity">
    <reaction evidence="1">
        <text>(2R,3S)-3-isopropylmalate = (2S)-2-isopropylmalate</text>
        <dbReference type="Rhea" id="RHEA:32287"/>
        <dbReference type="ChEBI" id="CHEBI:1178"/>
        <dbReference type="ChEBI" id="CHEBI:35121"/>
        <dbReference type="EC" id="4.2.1.33"/>
    </reaction>
</comment>
<comment type="cofactor">
    <cofactor evidence="1">
        <name>[4Fe-4S] cluster</name>
        <dbReference type="ChEBI" id="CHEBI:49883"/>
    </cofactor>
    <text evidence="1">Binds 1 [4Fe-4S] cluster per subunit.</text>
</comment>
<comment type="pathway">
    <text evidence="1">Amino-acid biosynthesis; L-leucine biosynthesis; L-leucine from 3-methyl-2-oxobutanoate: step 2/4.</text>
</comment>
<comment type="subunit">
    <text evidence="1">Heterodimer of LeuC and LeuD.</text>
</comment>
<comment type="similarity">
    <text evidence="1">Belongs to the aconitase/IPM isomerase family. LeuC type 1 subfamily.</text>
</comment>
<proteinExistence type="inferred from homology"/>
<sequence length="469" mass="50904">MAKTLYEKLFDSHIVYEAEGETPILYINRHLIHEVTSPQAFDGLRVANRQVRQVNKTFGTMDHSISTQVRDVNKLEGQAKIQVLELDKNTKATGIKLFDITTKEQGIVHVMGPEQGLTLPGMTIVCGDSHTATHGAFGALAFGIGTSEVEHVLATQTLKQARAKSMKIEVRGKVASGITAKDIILAIIGKTTMAGGTGHVVEFCGEAIRDLSMEGRMTVCNMAIEMGAKAGLIAPDETTFAYLKDRPHAPKGKDWDDAVAYWKTLKSDDDAQFDTVVTLEAKDIAPQVTWGTNPGQVISVNETIPNPQEMADPVQRASAEKALHYIGLEAGTNLKDIKVDQVFIGSCTNSRIEDLRAAAAVMKGRKKADNVKRILVVPGSGLVKEQAEKEGLDKIFIAAGAEWRNPGCSMCLGMNDDRLGEWERCASTSNRNFEGRQGRNGRTHLVSPAMAAAAGMFGKFVDIREVALN</sequence>
<reference key="1">
    <citation type="journal article" date="2005" name="J. Bacteriol.">
        <title>Genomic sequence of an otitis media isolate of nontypeable Haemophilus influenzae: comparative study with H. influenzae serotype d, strain KW20.</title>
        <authorList>
            <person name="Harrison A."/>
            <person name="Dyer D.W."/>
            <person name="Gillaspy A."/>
            <person name="Ray W.C."/>
            <person name="Mungur R."/>
            <person name="Carson M.B."/>
            <person name="Zhong H."/>
            <person name="Gipson J."/>
            <person name="Gipson M."/>
            <person name="Johnson L.S."/>
            <person name="Lewis L."/>
            <person name="Bakaletz L.O."/>
            <person name="Munson R.S. Jr."/>
        </authorList>
    </citation>
    <scope>NUCLEOTIDE SEQUENCE [LARGE SCALE GENOMIC DNA]</scope>
    <source>
        <strain>86-028NP</strain>
    </source>
</reference>
<gene>
    <name evidence="1" type="primary">leuC</name>
    <name type="ordered locus">NTHI1162</name>
</gene>
<protein>
    <recommendedName>
        <fullName evidence="1">3-isopropylmalate dehydratase large subunit</fullName>
        <ecNumber evidence="1">4.2.1.33</ecNumber>
    </recommendedName>
    <alternativeName>
        <fullName evidence="1">Alpha-IPM isomerase</fullName>
        <shortName evidence="1">IPMI</shortName>
    </alternativeName>
    <alternativeName>
        <fullName evidence="1">Isopropylmalate isomerase</fullName>
    </alternativeName>
</protein>